<name>FLUC_RUEST</name>
<reference key="1">
    <citation type="submission" date="2006-05" db="EMBL/GenBank/DDBJ databases">
        <title>Complete sequence of chromosome of Silicibacter sp. TM1040.</title>
        <authorList>
            <consortium name="US DOE Joint Genome Institute"/>
            <person name="Copeland A."/>
            <person name="Lucas S."/>
            <person name="Lapidus A."/>
            <person name="Barry K."/>
            <person name="Detter J.C."/>
            <person name="Glavina del Rio T."/>
            <person name="Hammon N."/>
            <person name="Israni S."/>
            <person name="Dalin E."/>
            <person name="Tice H."/>
            <person name="Pitluck S."/>
            <person name="Brettin T."/>
            <person name="Bruce D."/>
            <person name="Han C."/>
            <person name="Tapia R."/>
            <person name="Goodwin L."/>
            <person name="Thompson L.S."/>
            <person name="Gilna P."/>
            <person name="Schmutz J."/>
            <person name="Larimer F."/>
            <person name="Land M."/>
            <person name="Hauser L."/>
            <person name="Kyrpides N."/>
            <person name="Kim E."/>
            <person name="Belas R."/>
            <person name="Moran M.A."/>
            <person name="Buchan A."/>
            <person name="Gonzalez J.M."/>
            <person name="Schell M.A."/>
            <person name="Sun F."/>
            <person name="Richardson P."/>
        </authorList>
    </citation>
    <scope>NUCLEOTIDE SEQUENCE [LARGE SCALE GENOMIC DNA]</scope>
    <source>
        <strain>TM1040</strain>
    </source>
</reference>
<keyword id="KW-0997">Cell inner membrane</keyword>
<keyword id="KW-1003">Cell membrane</keyword>
<keyword id="KW-0407">Ion channel</keyword>
<keyword id="KW-0406">Ion transport</keyword>
<keyword id="KW-0472">Membrane</keyword>
<keyword id="KW-0479">Metal-binding</keyword>
<keyword id="KW-1185">Reference proteome</keyword>
<keyword id="KW-0915">Sodium</keyword>
<keyword id="KW-0812">Transmembrane</keyword>
<keyword id="KW-1133">Transmembrane helix</keyword>
<keyword id="KW-0813">Transport</keyword>
<proteinExistence type="inferred from homology"/>
<gene>
    <name evidence="1" type="primary">fluC</name>
    <name evidence="1" type="synonym">crcB</name>
    <name type="ordered locus">TM1040_0290</name>
</gene>
<protein>
    <recommendedName>
        <fullName evidence="1">Fluoride-specific ion channel FluC</fullName>
    </recommendedName>
</protein>
<sequence length="126" mass="12541">MLITVLNVALGGAIGASCRYLIGVGVLRALGPTGFPVGVLGVNILGSALMGAFVVLAAHKGLTHLSPFVMTGVLGGFTTFSAFSLEAVTLFERGAYGQAALYIGLSAGLSIAALALGMMAARGVLT</sequence>
<feature type="chain" id="PRO_0000252939" description="Fluoride-specific ion channel FluC">
    <location>
        <begin position="1"/>
        <end position="126"/>
    </location>
</feature>
<feature type="transmembrane region" description="Helical" evidence="1">
    <location>
        <begin position="2"/>
        <end position="22"/>
    </location>
</feature>
<feature type="transmembrane region" description="Helical" evidence="1">
    <location>
        <begin position="37"/>
        <end position="57"/>
    </location>
</feature>
<feature type="transmembrane region" description="Helical" evidence="1">
    <location>
        <begin position="65"/>
        <end position="85"/>
    </location>
</feature>
<feature type="transmembrane region" description="Helical" evidence="1">
    <location>
        <begin position="99"/>
        <end position="119"/>
    </location>
</feature>
<feature type="binding site" evidence="1">
    <location>
        <position position="75"/>
    </location>
    <ligand>
        <name>Na(+)</name>
        <dbReference type="ChEBI" id="CHEBI:29101"/>
        <note>structural</note>
    </ligand>
</feature>
<feature type="binding site" evidence="1">
    <location>
        <position position="78"/>
    </location>
    <ligand>
        <name>Na(+)</name>
        <dbReference type="ChEBI" id="CHEBI:29101"/>
        <note>structural</note>
    </ligand>
</feature>
<evidence type="ECO:0000255" key="1">
    <source>
        <dbReference type="HAMAP-Rule" id="MF_00454"/>
    </source>
</evidence>
<evidence type="ECO:0000305" key="2"/>
<accession>Q1GJZ3</accession>
<organism>
    <name type="scientific">Ruegeria sp. (strain TM1040)</name>
    <name type="common">Silicibacter sp.</name>
    <dbReference type="NCBI Taxonomy" id="292414"/>
    <lineage>
        <taxon>Bacteria</taxon>
        <taxon>Pseudomonadati</taxon>
        <taxon>Pseudomonadota</taxon>
        <taxon>Alphaproteobacteria</taxon>
        <taxon>Rhodobacterales</taxon>
        <taxon>Roseobacteraceae</taxon>
        <taxon>Ruegeria</taxon>
    </lineage>
</organism>
<comment type="function">
    <text evidence="1">Fluoride-specific ion channel. Important for reducing fluoride concentration in the cell, thus reducing its toxicity.</text>
</comment>
<comment type="catalytic activity">
    <reaction evidence="1">
        <text>fluoride(in) = fluoride(out)</text>
        <dbReference type="Rhea" id="RHEA:76159"/>
        <dbReference type="ChEBI" id="CHEBI:17051"/>
    </reaction>
    <physiologicalReaction direction="left-to-right" evidence="1">
        <dbReference type="Rhea" id="RHEA:76160"/>
    </physiologicalReaction>
</comment>
<comment type="activity regulation">
    <text evidence="1">Na(+) is not transported, but it plays an essential structural role and its presence is essential for fluoride channel function.</text>
</comment>
<comment type="subcellular location">
    <subcellularLocation>
        <location evidence="1">Cell inner membrane</location>
        <topology evidence="1">Multi-pass membrane protein</topology>
    </subcellularLocation>
</comment>
<comment type="similarity">
    <text evidence="1">Belongs to the fluoride channel Fluc/FEX (TC 1.A.43) family.</text>
</comment>
<comment type="sequence caution" evidence="2">
    <conflict type="erroneous initiation">
        <sequence resource="EMBL-CDS" id="ABF63023"/>
    </conflict>
</comment>
<dbReference type="EMBL" id="CP000377">
    <property type="protein sequence ID" value="ABF63023.1"/>
    <property type="status" value="ALT_INIT"/>
    <property type="molecule type" value="Genomic_DNA"/>
</dbReference>
<dbReference type="RefSeq" id="WP_044026649.1">
    <property type="nucleotide sequence ID" value="NC_008044.1"/>
</dbReference>
<dbReference type="SMR" id="Q1GJZ3"/>
<dbReference type="STRING" id="292414.TM1040_0290"/>
<dbReference type="KEGG" id="sit:TM1040_0290"/>
<dbReference type="eggNOG" id="COG0239">
    <property type="taxonomic scope" value="Bacteria"/>
</dbReference>
<dbReference type="HOGENOM" id="CLU_114342_3_0_5"/>
<dbReference type="OrthoDB" id="9806299at2"/>
<dbReference type="Proteomes" id="UP000000636">
    <property type="component" value="Chromosome"/>
</dbReference>
<dbReference type="GO" id="GO:0005886">
    <property type="term" value="C:plasma membrane"/>
    <property type="evidence" value="ECO:0007669"/>
    <property type="project" value="UniProtKB-SubCell"/>
</dbReference>
<dbReference type="GO" id="GO:0062054">
    <property type="term" value="F:fluoride channel activity"/>
    <property type="evidence" value="ECO:0007669"/>
    <property type="project" value="UniProtKB-UniRule"/>
</dbReference>
<dbReference type="GO" id="GO:0046872">
    <property type="term" value="F:metal ion binding"/>
    <property type="evidence" value="ECO:0007669"/>
    <property type="project" value="UniProtKB-KW"/>
</dbReference>
<dbReference type="GO" id="GO:0140114">
    <property type="term" value="P:cellular detoxification of fluoride"/>
    <property type="evidence" value="ECO:0007669"/>
    <property type="project" value="UniProtKB-UniRule"/>
</dbReference>
<dbReference type="HAMAP" id="MF_00454">
    <property type="entry name" value="FluC"/>
    <property type="match status" value="1"/>
</dbReference>
<dbReference type="InterPro" id="IPR003691">
    <property type="entry name" value="FluC"/>
</dbReference>
<dbReference type="NCBIfam" id="NF010805">
    <property type="entry name" value="PRK14209.1"/>
    <property type="match status" value="1"/>
</dbReference>
<dbReference type="PANTHER" id="PTHR28259">
    <property type="entry name" value="FLUORIDE EXPORT PROTEIN 1-RELATED"/>
    <property type="match status" value="1"/>
</dbReference>
<dbReference type="PANTHER" id="PTHR28259:SF1">
    <property type="entry name" value="FLUORIDE EXPORT PROTEIN 1-RELATED"/>
    <property type="match status" value="1"/>
</dbReference>
<dbReference type="Pfam" id="PF02537">
    <property type="entry name" value="CRCB"/>
    <property type="match status" value="1"/>
</dbReference>